<comment type="function">
    <text evidence="1">Folate-binding protein involved in regulating the level of ATP-DnaA and in the modification of some tRNAs. It is probably a key factor in regulatory networks that act via tRNA modification, such as initiation of chromosomal replication.</text>
</comment>
<comment type="subcellular location">
    <subcellularLocation>
        <location evidence="1">Cytoplasm</location>
    </subcellularLocation>
</comment>
<comment type="similarity">
    <text evidence="1">Belongs to the tRNA-modifying YgfZ family.</text>
</comment>
<organism>
    <name type="scientific">Escherichia coli (strain K12 / MC4100 / BW2952)</name>
    <dbReference type="NCBI Taxonomy" id="595496"/>
    <lineage>
        <taxon>Bacteria</taxon>
        <taxon>Pseudomonadati</taxon>
        <taxon>Pseudomonadota</taxon>
        <taxon>Gammaproteobacteria</taxon>
        <taxon>Enterobacterales</taxon>
        <taxon>Enterobacteriaceae</taxon>
        <taxon>Escherichia</taxon>
    </lineage>
</organism>
<reference key="1">
    <citation type="journal article" date="2009" name="J. Bacteriol.">
        <title>Genomic sequencing reveals regulatory mutations and recombinational events in the widely used MC4100 lineage of Escherichia coli K-12.</title>
        <authorList>
            <person name="Ferenci T."/>
            <person name="Zhou Z."/>
            <person name="Betteridge T."/>
            <person name="Ren Y."/>
            <person name="Liu Y."/>
            <person name="Feng L."/>
            <person name="Reeves P.R."/>
            <person name="Wang L."/>
        </authorList>
    </citation>
    <scope>NUCLEOTIDE SEQUENCE [LARGE SCALE GENOMIC DNA]</scope>
    <source>
        <strain>K12 / MC4100 / BW2952</strain>
    </source>
</reference>
<evidence type="ECO:0000255" key="1">
    <source>
        <dbReference type="HAMAP-Rule" id="MF_01175"/>
    </source>
</evidence>
<feature type="chain" id="PRO_1000213744" description="tRNA-modifying protein YgfZ">
    <location>
        <begin position="1"/>
        <end position="326"/>
    </location>
</feature>
<feature type="binding site" evidence="1">
    <location>
        <position position="27"/>
    </location>
    <ligand>
        <name>folate</name>
        <dbReference type="ChEBI" id="CHEBI:62501"/>
    </ligand>
</feature>
<feature type="binding site" evidence="1">
    <location>
        <position position="189"/>
    </location>
    <ligand>
        <name>folate</name>
        <dbReference type="ChEBI" id="CHEBI:62501"/>
    </ligand>
</feature>
<protein>
    <recommendedName>
        <fullName evidence="1">tRNA-modifying protein YgfZ</fullName>
    </recommendedName>
</protein>
<sequence>MAFTPFPPRQPTASARLPLTLMTLDDWALATITGADSEKYMQGQVTADVSQMAEDQHLLAAHCDAKGKMWSNLRLFRDGDGFAWIERRSVREPQLTELKKYAVFSKVTIAPDDERVLLGVAGFQARAALANLFSELPSKEKQVVKEGATTLLWFEHPAERFLIVTDEATANMLTDKLRGEAELNNSQQWLALNIEAGFPVIDAANSGQFIPQATNLQALGGISFKKGCYTGQEMVARAKFRGANKRALWLLAGSASRLPEAGEDLELKMGENWRRTGTVLAAVKLEDGQVVVQVVMNNDMEPDSIFRVRDDANTLHIEPLPYSLEE</sequence>
<name>YGFZ_ECOBW</name>
<dbReference type="EMBL" id="CP001396">
    <property type="protein sequence ID" value="ACR64417.1"/>
    <property type="molecule type" value="Genomic_DNA"/>
</dbReference>
<dbReference type="RefSeq" id="WP_000886062.1">
    <property type="nucleotide sequence ID" value="NC_012759.1"/>
</dbReference>
<dbReference type="SMR" id="C5A0H0"/>
<dbReference type="GeneID" id="75205265"/>
<dbReference type="KEGG" id="ebw:BWG_2623"/>
<dbReference type="HOGENOM" id="CLU_007884_6_1_6"/>
<dbReference type="GO" id="GO:0005737">
    <property type="term" value="C:cytoplasm"/>
    <property type="evidence" value="ECO:0007669"/>
    <property type="project" value="UniProtKB-SubCell"/>
</dbReference>
<dbReference type="GO" id="GO:0005542">
    <property type="term" value="F:folic acid binding"/>
    <property type="evidence" value="ECO:0007669"/>
    <property type="project" value="UniProtKB-UniRule"/>
</dbReference>
<dbReference type="GO" id="GO:0016226">
    <property type="term" value="P:iron-sulfur cluster assembly"/>
    <property type="evidence" value="ECO:0007669"/>
    <property type="project" value="TreeGrafter"/>
</dbReference>
<dbReference type="GO" id="GO:0009451">
    <property type="term" value="P:RNA modification"/>
    <property type="evidence" value="ECO:0007669"/>
    <property type="project" value="InterPro"/>
</dbReference>
<dbReference type="GO" id="GO:0008033">
    <property type="term" value="P:tRNA processing"/>
    <property type="evidence" value="ECO:0007669"/>
    <property type="project" value="UniProtKB-UniRule"/>
</dbReference>
<dbReference type="FunFam" id="2.40.30.160:FF:000001">
    <property type="entry name" value="tRNA-modifying protein YgfZ"/>
    <property type="match status" value="1"/>
</dbReference>
<dbReference type="FunFam" id="3.30.70.1400:FF:000002">
    <property type="entry name" value="tRNA-modifying protein YgfZ"/>
    <property type="match status" value="1"/>
</dbReference>
<dbReference type="FunFam" id="3.30.70.1630:FF:000001">
    <property type="entry name" value="tRNA-modifying protein YgfZ"/>
    <property type="match status" value="1"/>
</dbReference>
<dbReference type="Gene3D" id="2.40.30.160">
    <property type="match status" value="1"/>
</dbReference>
<dbReference type="Gene3D" id="3.30.70.1630">
    <property type="match status" value="1"/>
</dbReference>
<dbReference type="Gene3D" id="3.30.70.1400">
    <property type="entry name" value="Aminomethyltransferase beta-barrel domains"/>
    <property type="match status" value="1"/>
</dbReference>
<dbReference type="HAMAP" id="MF_01175">
    <property type="entry name" value="tRNA_modifying_YgfZ"/>
    <property type="match status" value="1"/>
</dbReference>
<dbReference type="InterPro" id="IPR006222">
    <property type="entry name" value="GCV_T_N"/>
</dbReference>
<dbReference type="InterPro" id="IPR029043">
    <property type="entry name" value="GcvT/YgfZ_C"/>
</dbReference>
<dbReference type="InterPro" id="IPR023758">
    <property type="entry name" value="tRNA-modifying_YgfZ"/>
</dbReference>
<dbReference type="InterPro" id="IPR045179">
    <property type="entry name" value="YgfZ/GcvT"/>
</dbReference>
<dbReference type="InterPro" id="IPR017703">
    <property type="entry name" value="YgfZ/GcvT_CS"/>
</dbReference>
<dbReference type="InterPro" id="IPR048451">
    <property type="entry name" value="YgfZ_barrel"/>
</dbReference>
<dbReference type="NCBIfam" id="NF007110">
    <property type="entry name" value="PRK09559.1"/>
    <property type="match status" value="1"/>
</dbReference>
<dbReference type="NCBIfam" id="TIGR03317">
    <property type="entry name" value="ygfZ_signature"/>
    <property type="match status" value="1"/>
</dbReference>
<dbReference type="PANTHER" id="PTHR22602">
    <property type="entry name" value="TRANSFERASE CAF17, MITOCHONDRIAL-RELATED"/>
    <property type="match status" value="1"/>
</dbReference>
<dbReference type="PANTHER" id="PTHR22602:SF0">
    <property type="entry name" value="TRANSFERASE CAF17, MITOCHONDRIAL-RELATED"/>
    <property type="match status" value="1"/>
</dbReference>
<dbReference type="Pfam" id="PF01571">
    <property type="entry name" value="GCV_T"/>
    <property type="match status" value="1"/>
</dbReference>
<dbReference type="Pfam" id="PF21130">
    <property type="entry name" value="YgfZ_barrel"/>
    <property type="match status" value="1"/>
</dbReference>
<dbReference type="SUPFAM" id="SSF101790">
    <property type="entry name" value="Aminomethyltransferase beta-barrel domain"/>
    <property type="match status" value="1"/>
</dbReference>
<dbReference type="SUPFAM" id="SSF103025">
    <property type="entry name" value="Folate-binding domain"/>
    <property type="match status" value="1"/>
</dbReference>
<accession>C5A0H0</accession>
<proteinExistence type="inferred from homology"/>
<gene>
    <name evidence="1" type="primary">ygfZ</name>
    <name type="ordered locus">BWG_2623</name>
</gene>
<keyword id="KW-0963">Cytoplasm</keyword>
<keyword id="KW-0290">Folate-binding</keyword>
<keyword id="KW-0819">tRNA processing</keyword>